<keyword id="KW-0963">Cytoplasm</keyword>
<keyword id="KW-0647">Proteasome</keyword>
<evidence type="ECO:0000255" key="1">
    <source>
        <dbReference type="HAMAP-Rule" id="MF_00289"/>
    </source>
</evidence>
<evidence type="ECO:0000256" key="2">
    <source>
        <dbReference type="SAM" id="MobiDB-lite"/>
    </source>
</evidence>
<proteinExistence type="inferred from homology"/>
<reference key="1">
    <citation type="journal article" date="2007" name="J. Bacteriol.">
        <title>Genome sequence and analysis of the soil cellulolytic actinomycete Thermobifida fusca YX.</title>
        <authorList>
            <person name="Lykidis A."/>
            <person name="Mavromatis K."/>
            <person name="Ivanova N."/>
            <person name="Anderson I."/>
            <person name="Land M."/>
            <person name="DiBartolo G."/>
            <person name="Martinez M."/>
            <person name="Lapidus A."/>
            <person name="Lucas S."/>
            <person name="Copeland A."/>
            <person name="Richardson P."/>
            <person name="Wilson D.B."/>
            <person name="Kyrpides N."/>
        </authorList>
    </citation>
    <scope>NUCLEOTIDE SEQUENCE [LARGE SCALE GENOMIC DNA]</scope>
    <source>
        <strain>YX</strain>
    </source>
</reference>
<gene>
    <name evidence="1" type="primary">prcA</name>
    <name type="ordered locus">Tfu_1789</name>
</gene>
<protein>
    <recommendedName>
        <fullName evidence="1">Proteasome subunit alpha</fullName>
    </recommendedName>
    <alternativeName>
        <fullName evidence="1">20S proteasome alpha subunit</fullName>
    </alternativeName>
    <alternativeName>
        <fullName evidence="1">Proteasome core protein PrcA</fullName>
    </alternativeName>
</protein>
<dbReference type="EMBL" id="CP000088">
    <property type="protein sequence ID" value="AAZ55824.1"/>
    <property type="molecule type" value="Genomic_DNA"/>
</dbReference>
<dbReference type="SMR" id="Q47NZ5"/>
<dbReference type="STRING" id="269800.Tfu_1789"/>
<dbReference type="MEROPS" id="T01.980"/>
<dbReference type="KEGG" id="tfu:Tfu_1789"/>
<dbReference type="eggNOG" id="COG0638">
    <property type="taxonomic scope" value="Bacteria"/>
</dbReference>
<dbReference type="HOGENOM" id="CLU_071031_0_0_11"/>
<dbReference type="UniPathway" id="UPA00997"/>
<dbReference type="GO" id="GO:0005737">
    <property type="term" value="C:cytoplasm"/>
    <property type="evidence" value="ECO:0007669"/>
    <property type="project" value="UniProtKB-SubCell"/>
</dbReference>
<dbReference type="GO" id="GO:0019773">
    <property type="term" value="C:proteasome core complex, alpha-subunit complex"/>
    <property type="evidence" value="ECO:0007669"/>
    <property type="project" value="UniProtKB-UniRule"/>
</dbReference>
<dbReference type="GO" id="GO:0004298">
    <property type="term" value="F:threonine-type endopeptidase activity"/>
    <property type="evidence" value="ECO:0007669"/>
    <property type="project" value="InterPro"/>
</dbReference>
<dbReference type="GO" id="GO:0019941">
    <property type="term" value="P:modification-dependent protein catabolic process"/>
    <property type="evidence" value="ECO:0007669"/>
    <property type="project" value="UniProtKB-UniRule"/>
</dbReference>
<dbReference type="GO" id="GO:0010498">
    <property type="term" value="P:proteasomal protein catabolic process"/>
    <property type="evidence" value="ECO:0007669"/>
    <property type="project" value="UniProtKB-UniRule"/>
</dbReference>
<dbReference type="CDD" id="cd01906">
    <property type="entry name" value="proteasome_protease_HslV"/>
    <property type="match status" value="1"/>
</dbReference>
<dbReference type="Gene3D" id="3.60.20.10">
    <property type="entry name" value="Glutamine Phosphoribosylpyrophosphate, subunit 1, domain 1"/>
    <property type="match status" value="1"/>
</dbReference>
<dbReference type="HAMAP" id="MF_00289_B">
    <property type="entry name" value="Proteasome_A_B"/>
    <property type="match status" value="1"/>
</dbReference>
<dbReference type="InterPro" id="IPR029055">
    <property type="entry name" value="Ntn_hydrolases_N"/>
</dbReference>
<dbReference type="InterPro" id="IPR050115">
    <property type="entry name" value="Proteasome_alpha"/>
</dbReference>
<dbReference type="InterPro" id="IPR023332">
    <property type="entry name" value="Proteasome_alpha-type"/>
</dbReference>
<dbReference type="InterPro" id="IPR022296">
    <property type="entry name" value="Proteasome_asu_bac"/>
</dbReference>
<dbReference type="InterPro" id="IPR001353">
    <property type="entry name" value="Proteasome_sua/b"/>
</dbReference>
<dbReference type="NCBIfam" id="TIGR03691">
    <property type="entry name" value="20S_bact_alpha"/>
    <property type="match status" value="1"/>
</dbReference>
<dbReference type="PANTHER" id="PTHR11599">
    <property type="entry name" value="PROTEASOME SUBUNIT ALPHA/BETA"/>
    <property type="match status" value="1"/>
</dbReference>
<dbReference type="Pfam" id="PF00227">
    <property type="entry name" value="Proteasome"/>
    <property type="match status" value="1"/>
</dbReference>
<dbReference type="SUPFAM" id="SSF56235">
    <property type="entry name" value="N-terminal nucleophile aminohydrolases (Ntn hydrolases)"/>
    <property type="match status" value="1"/>
</dbReference>
<dbReference type="PROSITE" id="PS51475">
    <property type="entry name" value="PROTEASOME_ALPHA_2"/>
    <property type="match status" value="1"/>
</dbReference>
<accession>Q47NZ5</accession>
<sequence length="249" mass="27824">MSMPFYVSPEQIMKDKADYARKGIARGRSAVVLQYEGGILFVADNVSRTLHKISELYDRVAFAAVGRYNEFENLRLAGVRFADMHGYTYDRSDVTGQMLANAYAQTLGAVFTESSKPWEVEIVVAEVGDSPDSDQIYRITFDGSVVDERDFLAMGGSAERVTAALRERYVKNMSLTDALRVAVHGLAHENGERRELKASSLEVAMLERSRPHRKFRRIQGERLARMLQEAREAEEAAEAQSSEDGGATD</sequence>
<organism>
    <name type="scientific">Thermobifida fusca (strain YX)</name>
    <dbReference type="NCBI Taxonomy" id="269800"/>
    <lineage>
        <taxon>Bacteria</taxon>
        <taxon>Bacillati</taxon>
        <taxon>Actinomycetota</taxon>
        <taxon>Actinomycetes</taxon>
        <taxon>Streptosporangiales</taxon>
        <taxon>Nocardiopsidaceae</taxon>
        <taxon>Thermobifida</taxon>
    </lineage>
</organism>
<name>PSA_THEFY</name>
<comment type="function">
    <text evidence="1">Component of the proteasome core, a large protease complex with broad specificity involved in protein degradation.</text>
</comment>
<comment type="activity regulation">
    <text evidence="1">The formation of the proteasomal ATPase ARC-20S proteasome complex, likely via the docking of the C-termini of ARC into the intersubunit pockets in the alpha-rings, may trigger opening of the gate for substrate entry. Interconversion between the open-gate and close-gate conformations leads to a dynamic regulation of the 20S proteasome proteolysis activity.</text>
</comment>
<comment type="pathway">
    <text evidence="1">Protein degradation; proteasomal Pup-dependent pathway.</text>
</comment>
<comment type="subunit">
    <text evidence="1">The 20S proteasome core is composed of 14 alpha and 14 beta subunits that assemble into four stacked heptameric rings, resulting in a barrel-shaped structure. The two inner rings, each composed of seven catalytic beta subunits, are sandwiched by two outer rings, each composed of seven alpha subunits. The catalytic chamber with the active sites is on the inside of the barrel. Has a gated structure, the ends of the cylinder being occluded by the N-termini of the alpha-subunits. Is capped by the proteasome-associated ATPase, ARC.</text>
</comment>
<comment type="subcellular location">
    <subcellularLocation>
        <location evidence="1">Cytoplasm</location>
    </subcellularLocation>
</comment>
<comment type="similarity">
    <text evidence="1">Belongs to the peptidase T1A family.</text>
</comment>
<feature type="chain" id="PRO_0000397180" description="Proteasome subunit alpha">
    <location>
        <begin position="1"/>
        <end position="249"/>
    </location>
</feature>
<feature type="region of interest" description="Disordered" evidence="2">
    <location>
        <begin position="229"/>
        <end position="249"/>
    </location>
</feature>